<organism>
    <name type="scientific">Solanum tuberosum</name>
    <name type="common">Potato</name>
    <dbReference type="NCBI Taxonomy" id="4113"/>
    <lineage>
        <taxon>Eukaryota</taxon>
        <taxon>Viridiplantae</taxon>
        <taxon>Streptophyta</taxon>
        <taxon>Embryophyta</taxon>
        <taxon>Tracheophyta</taxon>
        <taxon>Spermatophyta</taxon>
        <taxon>Magnoliopsida</taxon>
        <taxon>eudicotyledons</taxon>
        <taxon>Gunneridae</taxon>
        <taxon>Pentapetalae</taxon>
        <taxon>asterids</taxon>
        <taxon>lamiids</taxon>
        <taxon>Solanales</taxon>
        <taxon>Solanaceae</taxon>
        <taxon>Solanoideae</taxon>
        <taxon>Solaneae</taxon>
        <taxon>Solanum</taxon>
    </lineage>
</organism>
<reference key="1">
    <citation type="journal article" date="1991" name="J. Biol. Chem.">
        <title>Structural comparison, modes of expression, and putative cis-acting elements of the two 4-coumarate: CoA ligase genes in potato.</title>
        <authorList>
            <person name="Becker-Andre M."/>
            <person name="Schulze-Lefert P."/>
            <person name="Hahlbrock K."/>
        </authorList>
    </citation>
    <scope>NUCLEOTIDE SEQUENCE</scope>
</reference>
<name>4CL2_SOLTU</name>
<proteinExistence type="inferred from homology"/>
<gene>
    <name type="primary">4CL2</name>
    <name type="synonym">4CL-2</name>
</gene>
<evidence type="ECO:0000250" key="1">
    <source>
        <dbReference type="UniProtKB" id="O24146"/>
    </source>
</evidence>
<evidence type="ECO:0000250" key="2">
    <source>
        <dbReference type="UniProtKB" id="Q42524"/>
    </source>
</evidence>
<evidence type="ECO:0000305" key="3"/>
<sequence>MPMDIETKQSGDLIFRSKLPDIYIPKHLPLHSYCFENLSEFNSRPCLIDGANDRIYTYAEVELTSRKVAVGLNKLGIQQKDTIMILLPNCPEFVFAFIGASYLGAISTMANPLFTPAEVVKQAKASSAKIVITQACFAGKVKDYAIENDLKVICVDSAPEGCVHFSELIQSDEHEIPDVKIQPDDVVALPYSSGTTGLPKGVMLTHKGLVTSVAQQVDGENANLYMHSDDVLMCVLPLFHIYSLNSVLLCALRVGAAILIMQKFDIAQFLELIPKHKVTIGPFVPPIVLAIAKSPLVHNYDLSSVRTVMSGAAPLGKELEDAVRAKFPNAKLGQGYGMTEAGPVLAMCLAFAKEPFDIKSGACGTVVRNAEMKIVDPDTGCSLPRNQPGEICIRGDQIMKGYLNDPEATARTIEKEGWLHTGDIGFIDDDDELFIVDRLKELIKYKGFQVAPAELEALLINHPDISDAAVVPMIDEQAGEVPVAFVVRSNGSTITEDEVKDFISKQVIFYKRIKRVFFVETVPKSPSGKILRKDLRARLAAGISN</sequence>
<protein>
    <recommendedName>
        <fullName>4-coumarate--CoA ligase 2</fullName>
        <shortName>4CL 2</shortName>
        <ecNumber evidence="1">6.2.1.12</ecNumber>
    </recommendedName>
    <alternativeName>
        <fullName>4-coumaroyl-CoA synthase 2</fullName>
    </alternativeName>
</protein>
<feature type="chain" id="PRO_0000193037" description="4-coumarate--CoA ligase 2">
    <location>
        <begin position="1"/>
        <end position="545"/>
    </location>
</feature>
<feature type="region of interest" description="SBD1" evidence="2">
    <location>
        <begin position="265"/>
        <end position="334"/>
    </location>
</feature>
<feature type="region of interest" description="SBD2" evidence="2">
    <location>
        <begin position="335"/>
        <end position="402"/>
    </location>
</feature>
<feature type="binding site" evidence="1">
    <location>
        <position position="192"/>
    </location>
    <ligand>
        <name>ATP</name>
        <dbReference type="ChEBI" id="CHEBI:30616"/>
    </ligand>
</feature>
<feature type="binding site" evidence="1">
    <location>
        <position position="193"/>
    </location>
    <ligand>
        <name>ATP</name>
        <dbReference type="ChEBI" id="CHEBI:30616"/>
    </ligand>
</feature>
<feature type="binding site" evidence="1">
    <location>
        <position position="194"/>
    </location>
    <ligand>
        <name>ATP</name>
        <dbReference type="ChEBI" id="CHEBI:30616"/>
    </ligand>
</feature>
<feature type="binding site" evidence="1">
    <location>
        <position position="195"/>
    </location>
    <ligand>
        <name>ATP</name>
        <dbReference type="ChEBI" id="CHEBI:30616"/>
    </ligand>
</feature>
<feature type="binding site" evidence="1">
    <location>
        <position position="196"/>
    </location>
    <ligand>
        <name>ATP</name>
        <dbReference type="ChEBI" id="CHEBI:30616"/>
    </ligand>
</feature>
<feature type="binding site" evidence="1">
    <location>
        <position position="200"/>
    </location>
    <ligand>
        <name>ATP</name>
        <dbReference type="ChEBI" id="CHEBI:30616"/>
    </ligand>
</feature>
<feature type="binding site" evidence="1">
    <location>
        <position position="242"/>
    </location>
    <ligand>
        <name>(E)-4-coumaroyl-AMP</name>
        <dbReference type="ChEBI" id="CHEBI:192348"/>
    </ligand>
</feature>
<feature type="binding site" evidence="1">
    <location>
        <position position="246"/>
    </location>
    <ligand>
        <name>(E)-4-coumaroyl-AMP</name>
        <dbReference type="ChEBI" id="CHEBI:192348"/>
    </ligand>
</feature>
<feature type="binding site" evidence="1">
    <location>
        <position position="263"/>
    </location>
    <ligand>
        <name>CoA</name>
        <dbReference type="ChEBI" id="CHEBI:57287"/>
    </ligand>
</feature>
<feature type="binding site" evidence="1">
    <location>
        <position position="312"/>
    </location>
    <ligand>
        <name>(E)-4-coumaroyl-AMP</name>
        <dbReference type="ChEBI" id="CHEBI:192348"/>
    </ligand>
</feature>
<feature type="binding site" evidence="1">
    <location>
        <position position="334"/>
    </location>
    <ligand>
        <name>(E)-4-coumaroyl-AMP</name>
        <dbReference type="ChEBI" id="CHEBI:192348"/>
    </ligand>
</feature>
<feature type="binding site" evidence="1">
    <location>
        <position position="334"/>
    </location>
    <ligand>
        <name>ATP</name>
        <dbReference type="ChEBI" id="CHEBI:30616"/>
    </ligand>
</feature>
<feature type="binding site" evidence="1">
    <location>
        <position position="335"/>
    </location>
    <ligand>
        <name>(E)-4-coumaroyl-AMP</name>
        <dbReference type="ChEBI" id="CHEBI:192348"/>
    </ligand>
</feature>
<feature type="binding site" evidence="1">
    <location>
        <position position="335"/>
    </location>
    <ligand>
        <name>ATP</name>
        <dbReference type="ChEBI" id="CHEBI:30616"/>
    </ligand>
</feature>
<feature type="binding site" evidence="1">
    <location>
        <position position="339"/>
    </location>
    <ligand>
        <name>(E)-4-coumaroyl-AMP</name>
        <dbReference type="ChEBI" id="CHEBI:192348"/>
    </ligand>
</feature>
<feature type="binding site" evidence="1">
    <location>
        <position position="339"/>
    </location>
    <ligand>
        <name>ATP</name>
        <dbReference type="ChEBI" id="CHEBI:30616"/>
    </ligand>
</feature>
<feature type="binding site" evidence="1">
    <location>
        <position position="347"/>
    </location>
    <ligand>
        <name>(E)-4-coumaroyl-AMP</name>
        <dbReference type="ChEBI" id="CHEBI:192348"/>
    </ligand>
</feature>
<feature type="binding site" evidence="1">
    <location>
        <position position="423"/>
    </location>
    <ligand>
        <name>ATP</name>
        <dbReference type="ChEBI" id="CHEBI:30616"/>
    </ligand>
</feature>
<feature type="binding site" evidence="1">
    <location>
        <position position="438"/>
    </location>
    <ligand>
        <name>ATP</name>
        <dbReference type="ChEBI" id="CHEBI:30616"/>
    </ligand>
</feature>
<feature type="binding site" evidence="1">
    <location>
        <position position="440"/>
    </location>
    <ligand>
        <name>(E)-4-coumaroyl-AMP</name>
        <dbReference type="ChEBI" id="CHEBI:192348"/>
    </ligand>
</feature>
<feature type="binding site" evidence="1">
    <location>
        <position position="444"/>
    </location>
    <ligand>
        <name>(E)-4-coumaroyl-AMP</name>
        <dbReference type="ChEBI" id="CHEBI:192348"/>
    </ligand>
</feature>
<feature type="binding site" evidence="1">
    <location>
        <position position="446"/>
    </location>
    <ligand>
        <name>CoA</name>
        <dbReference type="ChEBI" id="CHEBI:57287"/>
    </ligand>
</feature>
<feature type="binding site" evidence="1">
    <location>
        <position position="447"/>
    </location>
    <ligand>
        <name>CoA</name>
        <dbReference type="ChEBI" id="CHEBI:57287"/>
    </ligand>
</feature>
<feature type="binding site" evidence="1">
    <location>
        <position position="529"/>
    </location>
    <ligand>
        <name>ATP</name>
        <dbReference type="ChEBI" id="CHEBI:30616"/>
    </ligand>
</feature>
<accession>P31685</accession>
<dbReference type="EC" id="6.2.1.12" evidence="1"/>
<dbReference type="PIR" id="B39827">
    <property type="entry name" value="B39827"/>
</dbReference>
<dbReference type="SMR" id="P31685"/>
<dbReference type="FunCoup" id="P31685">
    <property type="interactions" value="1798"/>
</dbReference>
<dbReference type="STRING" id="4113.P31685"/>
<dbReference type="PaxDb" id="4113-PGSC0003DMT400036886"/>
<dbReference type="eggNOG" id="KOG1176">
    <property type="taxonomic scope" value="Eukaryota"/>
</dbReference>
<dbReference type="InParanoid" id="P31685"/>
<dbReference type="UniPathway" id="UPA00372">
    <property type="reaction ID" value="UER00547"/>
</dbReference>
<dbReference type="Proteomes" id="UP000011115">
    <property type="component" value="Unassembled WGS sequence"/>
</dbReference>
<dbReference type="ExpressionAtlas" id="P31685">
    <property type="expression patterns" value="baseline and differential"/>
</dbReference>
<dbReference type="GO" id="GO:0016207">
    <property type="term" value="F:4-coumarate-CoA ligase activity"/>
    <property type="evidence" value="ECO:0007669"/>
    <property type="project" value="UniProtKB-EC"/>
</dbReference>
<dbReference type="GO" id="GO:0005524">
    <property type="term" value="F:ATP binding"/>
    <property type="evidence" value="ECO:0007669"/>
    <property type="project" value="UniProtKB-KW"/>
</dbReference>
<dbReference type="GO" id="GO:0016405">
    <property type="term" value="F:CoA-ligase activity"/>
    <property type="evidence" value="ECO:0000318"/>
    <property type="project" value="GO_Central"/>
</dbReference>
<dbReference type="GO" id="GO:0009698">
    <property type="term" value="P:phenylpropanoid metabolic process"/>
    <property type="evidence" value="ECO:0007669"/>
    <property type="project" value="UniProtKB-KW"/>
</dbReference>
<dbReference type="CDD" id="cd05904">
    <property type="entry name" value="4CL"/>
    <property type="match status" value="1"/>
</dbReference>
<dbReference type="FunFam" id="3.30.300.30:FF:000007">
    <property type="entry name" value="4-coumarate--CoA ligase 2"/>
    <property type="match status" value="1"/>
</dbReference>
<dbReference type="FunFam" id="3.40.50.12780:FF:000003">
    <property type="entry name" value="Long-chain-fatty-acid--CoA ligase FadD"/>
    <property type="match status" value="1"/>
</dbReference>
<dbReference type="Gene3D" id="3.30.300.30">
    <property type="match status" value="1"/>
</dbReference>
<dbReference type="Gene3D" id="3.40.50.12780">
    <property type="entry name" value="N-terminal domain of ligase-like"/>
    <property type="match status" value="1"/>
</dbReference>
<dbReference type="InterPro" id="IPR025110">
    <property type="entry name" value="AMP-bd_C"/>
</dbReference>
<dbReference type="InterPro" id="IPR045851">
    <property type="entry name" value="AMP-bd_C_sf"/>
</dbReference>
<dbReference type="InterPro" id="IPR020845">
    <property type="entry name" value="AMP-binding_CS"/>
</dbReference>
<dbReference type="InterPro" id="IPR000873">
    <property type="entry name" value="AMP-dep_synth/lig_dom"/>
</dbReference>
<dbReference type="InterPro" id="IPR042099">
    <property type="entry name" value="ANL_N_sf"/>
</dbReference>
<dbReference type="PANTHER" id="PTHR24096:SF402">
    <property type="entry name" value="4-COUMARATE--COA LIGASE 1"/>
    <property type="match status" value="1"/>
</dbReference>
<dbReference type="PANTHER" id="PTHR24096">
    <property type="entry name" value="LONG-CHAIN-FATTY-ACID--COA LIGASE"/>
    <property type="match status" value="1"/>
</dbReference>
<dbReference type="Pfam" id="PF00501">
    <property type="entry name" value="AMP-binding"/>
    <property type="match status" value="1"/>
</dbReference>
<dbReference type="Pfam" id="PF13193">
    <property type="entry name" value="AMP-binding_C"/>
    <property type="match status" value="1"/>
</dbReference>
<dbReference type="SUPFAM" id="SSF56801">
    <property type="entry name" value="Acetyl-CoA synthetase-like"/>
    <property type="match status" value="1"/>
</dbReference>
<dbReference type="PROSITE" id="PS00455">
    <property type="entry name" value="AMP_BINDING"/>
    <property type="match status" value="1"/>
</dbReference>
<keyword id="KW-0067">ATP-binding</keyword>
<keyword id="KW-0436">Ligase</keyword>
<keyword id="KW-0460">Magnesium</keyword>
<keyword id="KW-0547">Nucleotide-binding</keyword>
<keyword id="KW-0587">Phenylpropanoid metabolism</keyword>
<keyword id="KW-1185">Reference proteome</keyword>
<comment type="function">
    <text evidence="1">Carboxylate--CoA ligase that may use 4-coumarate as substrate. Follows a two-step reaction mechanism, wherein the carboxylate substrate first undergoes adenylation by ATP, followed by a thioesterification in the presence of CoA to yield the final CoA thioester.</text>
</comment>
<comment type="catalytic activity">
    <reaction evidence="1">
        <text>(E)-4-coumarate + ATP + CoA = (E)-4-coumaroyl-CoA + AMP + diphosphate</text>
        <dbReference type="Rhea" id="RHEA:19641"/>
        <dbReference type="ChEBI" id="CHEBI:12876"/>
        <dbReference type="ChEBI" id="CHEBI:30616"/>
        <dbReference type="ChEBI" id="CHEBI:33019"/>
        <dbReference type="ChEBI" id="CHEBI:57287"/>
        <dbReference type="ChEBI" id="CHEBI:85008"/>
        <dbReference type="ChEBI" id="CHEBI:456215"/>
        <dbReference type="EC" id="6.2.1.12"/>
    </reaction>
    <physiologicalReaction direction="left-to-right" evidence="1">
        <dbReference type="Rhea" id="RHEA:19642"/>
    </physiologicalReaction>
</comment>
<comment type="catalytic activity">
    <reaction evidence="1">
        <text>(E)-4-coumarate + ATP + H(+) = (E)-4-coumaroyl-AMP + diphosphate</text>
        <dbReference type="Rhea" id="RHEA:72419"/>
        <dbReference type="ChEBI" id="CHEBI:12876"/>
        <dbReference type="ChEBI" id="CHEBI:15378"/>
        <dbReference type="ChEBI" id="CHEBI:30616"/>
        <dbReference type="ChEBI" id="CHEBI:33019"/>
        <dbReference type="ChEBI" id="CHEBI:192348"/>
    </reaction>
    <physiologicalReaction direction="left-to-right" evidence="1">
        <dbReference type="Rhea" id="RHEA:72420"/>
    </physiologicalReaction>
</comment>
<comment type="catalytic activity">
    <reaction evidence="1">
        <text>(E)-4-coumaroyl-AMP + CoA = (E)-4-coumaroyl-CoA + AMP + H(+)</text>
        <dbReference type="Rhea" id="RHEA:72423"/>
        <dbReference type="ChEBI" id="CHEBI:15378"/>
        <dbReference type="ChEBI" id="CHEBI:57287"/>
        <dbReference type="ChEBI" id="CHEBI:85008"/>
        <dbReference type="ChEBI" id="CHEBI:192348"/>
        <dbReference type="ChEBI" id="CHEBI:456215"/>
    </reaction>
    <physiologicalReaction direction="left-to-right" evidence="1">
        <dbReference type="Rhea" id="RHEA:72424"/>
    </physiologicalReaction>
</comment>
<comment type="cofactor">
    <cofactor evidence="1">
        <name>Mg(2+)</name>
        <dbReference type="ChEBI" id="CHEBI:18420"/>
    </cofactor>
</comment>
<comment type="pathway">
    <text evidence="2">Phytoalexin biosynthesis; 3,4',5-trihydroxystilbene biosynthesis; 3,4',5-trihydroxystilbene from trans-4-coumarate: step 1/2.</text>
</comment>
<comment type="domain">
    <text evidence="2">Both substrate-binding domains (SBD1 and SBD2) are involved in the substrate recognition, and are sufficient to confer the substrate specificity.</text>
</comment>
<comment type="similarity">
    <text evidence="3">Belongs to the ATP-dependent AMP-binding enzyme family.</text>
</comment>